<feature type="chain" id="PRO_0000175223" description="Ferrochelatase">
    <location>
        <begin position="1"/>
        <end position="320"/>
    </location>
</feature>
<feature type="binding site" evidence="1">
    <location>
        <position position="194"/>
    </location>
    <ligand>
        <name>Fe cation</name>
        <dbReference type="ChEBI" id="CHEBI:24875"/>
    </ligand>
</feature>
<feature type="binding site" evidence="1">
    <location>
        <position position="275"/>
    </location>
    <ligand>
        <name>Fe cation</name>
        <dbReference type="ChEBI" id="CHEBI:24875"/>
    </ligand>
</feature>
<name>HEMH_VIBPA</name>
<accession>Q87RH3</accession>
<comment type="function">
    <text evidence="1">Catalyzes the ferrous insertion into protoporphyrin IX.</text>
</comment>
<comment type="catalytic activity">
    <reaction evidence="1">
        <text>heme b + 2 H(+) = protoporphyrin IX + Fe(2+)</text>
        <dbReference type="Rhea" id="RHEA:22584"/>
        <dbReference type="ChEBI" id="CHEBI:15378"/>
        <dbReference type="ChEBI" id="CHEBI:29033"/>
        <dbReference type="ChEBI" id="CHEBI:57306"/>
        <dbReference type="ChEBI" id="CHEBI:60344"/>
        <dbReference type="EC" id="4.98.1.1"/>
    </reaction>
</comment>
<comment type="pathway">
    <text evidence="1">Porphyrin-containing compound metabolism; protoheme biosynthesis; protoheme from protoporphyrin-IX: step 1/1.</text>
</comment>
<comment type="subcellular location">
    <subcellularLocation>
        <location evidence="1">Cytoplasm</location>
    </subcellularLocation>
</comment>
<comment type="similarity">
    <text evidence="1">Belongs to the ferrochelatase family.</text>
</comment>
<evidence type="ECO:0000255" key="1">
    <source>
        <dbReference type="HAMAP-Rule" id="MF_00323"/>
    </source>
</evidence>
<proteinExistence type="inferred from homology"/>
<sequence length="320" mass="36234">MQTKNKQGVLLVNLGTPDEPTAPAVKRFLSQFLHDHRVVDMTRWLWCPILHGVILPIRSPKVAKLYESVWMEEGSPLMVYSKRQAKKLAQHLDMPVELGMTYGNPSLQSGFEALIAQGVEEVIVLPLYPQYSGTTTAAVSDGITKAFKQLPVMPAFSFIRDYHDHPMYIEALAHSVRQYWEEHGKGDYLLCSYHGIPKRYADNGDIYPQHCEATTRLLGEALGLSSDQIGMAYQSRFGREEWLQPYTDKTLETITSKGVKKIDIMTPAFSSDCLETLEEIAGENKEIFMEAGGEQFHYIPCLNDDDMHIDMMAELVRSKL</sequence>
<gene>
    <name evidence="1" type="primary">hemH</name>
    <name type="ordered locus">VP0823</name>
</gene>
<organism>
    <name type="scientific">Vibrio parahaemolyticus serotype O3:K6 (strain RIMD 2210633)</name>
    <dbReference type="NCBI Taxonomy" id="223926"/>
    <lineage>
        <taxon>Bacteria</taxon>
        <taxon>Pseudomonadati</taxon>
        <taxon>Pseudomonadota</taxon>
        <taxon>Gammaproteobacteria</taxon>
        <taxon>Vibrionales</taxon>
        <taxon>Vibrionaceae</taxon>
        <taxon>Vibrio</taxon>
    </lineage>
</organism>
<reference key="1">
    <citation type="journal article" date="2003" name="Lancet">
        <title>Genome sequence of Vibrio parahaemolyticus: a pathogenic mechanism distinct from that of V. cholerae.</title>
        <authorList>
            <person name="Makino K."/>
            <person name="Oshima K."/>
            <person name="Kurokawa K."/>
            <person name="Yokoyama K."/>
            <person name="Uda T."/>
            <person name="Tagomori K."/>
            <person name="Iijima Y."/>
            <person name="Najima M."/>
            <person name="Nakano M."/>
            <person name="Yamashita A."/>
            <person name="Kubota Y."/>
            <person name="Kimura S."/>
            <person name="Yasunaga T."/>
            <person name="Honda T."/>
            <person name="Shinagawa H."/>
            <person name="Hattori M."/>
            <person name="Iida T."/>
        </authorList>
    </citation>
    <scope>NUCLEOTIDE SEQUENCE [LARGE SCALE GENOMIC DNA]</scope>
    <source>
        <strain>RIMD 2210633</strain>
    </source>
</reference>
<dbReference type="EC" id="4.98.1.1" evidence="1"/>
<dbReference type="EMBL" id="BA000031">
    <property type="protein sequence ID" value="BAC59086.1"/>
    <property type="molecule type" value="Genomic_DNA"/>
</dbReference>
<dbReference type="RefSeq" id="NP_797202.1">
    <property type="nucleotide sequence ID" value="NC_004603.1"/>
</dbReference>
<dbReference type="RefSeq" id="WP_005478510.1">
    <property type="nucleotide sequence ID" value="NC_004603.1"/>
</dbReference>
<dbReference type="SMR" id="Q87RH3"/>
<dbReference type="DNASU" id="1188320"/>
<dbReference type="GeneID" id="1188320"/>
<dbReference type="KEGG" id="vpa:VP0823"/>
<dbReference type="PATRIC" id="fig|223926.6.peg.780"/>
<dbReference type="eggNOG" id="COG0276">
    <property type="taxonomic scope" value="Bacteria"/>
</dbReference>
<dbReference type="HOGENOM" id="CLU_018884_0_0_6"/>
<dbReference type="UniPathway" id="UPA00252">
    <property type="reaction ID" value="UER00325"/>
</dbReference>
<dbReference type="Proteomes" id="UP000002493">
    <property type="component" value="Chromosome 1"/>
</dbReference>
<dbReference type="GO" id="GO:0005737">
    <property type="term" value="C:cytoplasm"/>
    <property type="evidence" value="ECO:0007669"/>
    <property type="project" value="UniProtKB-SubCell"/>
</dbReference>
<dbReference type="GO" id="GO:0004325">
    <property type="term" value="F:ferrochelatase activity"/>
    <property type="evidence" value="ECO:0007669"/>
    <property type="project" value="UniProtKB-UniRule"/>
</dbReference>
<dbReference type="GO" id="GO:0046872">
    <property type="term" value="F:metal ion binding"/>
    <property type="evidence" value="ECO:0007669"/>
    <property type="project" value="UniProtKB-KW"/>
</dbReference>
<dbReference type="GO" id="GO:0006783">
    <property type="term" value="P:heme biosynthetic process"/>
    <property type="evidence" value="ECO:0007669"/>
    <property type="project" value="UniProtKB-UniRule"/>
</dbReference>
<dbReference type="CDD" id="cd00419">
    <property type="entry name" value="Ferrochelatase_C"/>
    <property type="match status" value="1"/>
</dbReference>
<dbReference type="CDD" id="cd03411">
    <property type="entry name" value="Ferrochelatase_N"/>
    <property type="match status" value="1"/>
</dbReference>
<dbReference type="FunFam" id="3.40.50.1400:FF:000002">
    <property type="entry name" value="Ferrochelatase"/>
    <property type="match status" value="1"/>
</dbReference>
<dbReference type="Gene3D" id="3.40.50.1400">
    <property type="match status" value="2"/>
</dbReference>
<dbReference type="HAMAP" id="MF_00323">
    <property type="entry name" value="Ferrochelatase"/>
    <property type="match status" value="1"/>
</dbReference>
<dbReference type="InterPro" id="IPR001015">
    <property type="entry name" value="Ferrochelatase"/>
</dbReference>
<dbReference type="InterPro" id="IPR019772">
    <property type="entry name" value="Ferrochelatase_AS"/>
</dbReference>
<dbReference type="InterPro" id="IPR033644">
    <property type="entry name" value="Ferrochelatase_C"/>
</dbReference>
<dbReference type="InterPro" id="IPR033659">
    <property type="entry name" value="Ferrochelatase_N"/>
</dbReference>
<dbReference type="NCBIfam" id="TIGR00109">
    <property type="entry name" value="hemH"/>
    <property type="match status" value="1"/>
</dbReference>
<dbReference type="PANTHER" id="PTHR11108">
    <property type="entry name" value="FERROCHELATASE"/>
    <property type="match status" value="1"/>
</dbReference>
<dbReference type="PANTHER" id="PTHR11108:SF1">
    <property type="entry name" value="FERROCHELATASE, MITOCHONDRIAL"/>
    <property type="match status" value="1"/>
</dbReference>
<dbReference type="Pfam" id="PF00762">
    <property type="entry name" value="Ferrochelatase"/>
    <property type="match status" value="1"/>
</dbReference>
<dbReference type="SUPFAM" id="SSF53800">
    <property type="entry name" value="Chelatase"/>
    <property type="match status" value="1"/>
</dbReference>
<dbReference type="PROSITE" id="PS00534">
    <property type="entry name" value="FERROCHELATASE"/>
    <property type="match status" value="1"/>
</dbReference>
<keyword id="KW-0963">Cytoplasm</keyword>
<keyword id="KW-0350">Heme biosynthesis</keyword>
<keyword id="KW-0408">Iron</keyword>
<keyword id="KW-0456">Lyase</keyword>
<keyword id="KW-0479">Metal-binding</keyword>
<keyword id="KW-0627">Porphyrin biosynthesis</keyword>
<protein>
    <recommendedName>
        <fullName evidence="1">Ferrochelatase</fullName>
        <ecNumber evidence="1">4.98.1.1</ecNumber>
    </recommendedName>
    <alternativeName>
        <fullName evidence="1">Heme synthase</fullName>
    </alternativeName>
    <alternativeName>
        <fullName evidence="1">Protoheme ferro-lyase</fullName>
    </alternativeName>
</protein>